<sequence>MILYVLPTSLSLCLLLMIIYLLTANLFKFASYELKTPFECGFDPLSNMRSPMTTRFFILTVLFLIFDVEVVLLFPVLSMVSFMTSPLIIMSIILFMMVLLIGLLYEMYYGVLDWVLN</sequence>
<organism>
    <name type="scientific">Albinaria caerulea</name>
    <name type="common">Land snail</name>
    <dbReference type="NCBI Taxonomy" id="42349"/>
    <lineage>
        <taxon>Eukaryota</taxon>
        <taxon>Metazoa</taxon>
        <taxon>Spiralia</taxon>
        <taxon>Lophotrochozoa</taxon>
        <taxon>Mollusca</taxon>
        <taxon>Gastropoda</taxon>
        <taxon>Heterobranchia</taxon>
        <taxon>Euthyneura</taxon>
        <taxon>Panpulmonata</taxon>
        <taxon>Eupulmonata</taxon>
        <taxon>Stylommatophora</taxon>
        <taxon>Helicina</taxon>
        <taxon>Clausilioidea</taxon>
        <taxon>Clausiliidae</taxon>
        <taxon>Alopiinae</taxon>
        <taxon>Albinaria</taxon>
    </lineage>
</organism>
<protein>
    <recommendedName>
        <fullName>NADH-ubiquinone oxidoreductase chain 3</fullName>
        <ecNumber>7.1.1.2</ecNumber>
    </recommendedName>
    <alternativeName>
        <fullName>NADH dehydrogenase subunit 3</fullName>
    </alternativeName>
</protein>
<gene>
    <name type="primary">ND3</name>
</gene>
<name>NU3M_ALBCA</name>
<comment type="function">
    <text evidence="1">Core subunit of the mitochondrial membrane respiratory chain NADH dehydrogenase (Complex I) that is believed to belong to the minimal assembly required for catalysis. Complex I functions in the transfer of electrons from NADH to the respiratory chain. The immediate electron acceptor for the enzyme is believed to be ubiquinone (By similarity).</text>
</comment>
<comment type="catalytic activity">
    <reaction>
        <text>a ubiquinone + NADH + 5 H(+)(in) = a ubiquinol + NAD(+) + 4 H(+)(out)</text>
        <dbReference type="Rhea" id="RHEA:29091"/>
        <dbReference type="Rhea" id="RHEA-COMP:9565"/>
        <dbReference type="Rhea" id="RHEA-COMP:9566"/>
        <dbReference type="ChEBI" id="CHEBI:15378"/>
        <dbReference type="ChEBI" id="CHEBI:16389"/>
        <dbReference type="ChEBI" id="CHEBI:17976"/>
        <dbReference type="ChEBI" id="CHEBI:57540"/>
        <dbReference type="ChEBI" id="CHEBI:57945"/>
        <dbReference type="EC" id="7.1.1.2"/>
    </reaction>
</comment>
<comment type="subcellular location">
    <subcellularLocation>
        <location evidence="1">Mitochondrion membrane</location>
        <topology evidence="1">Multi-pass membrane protein</topology>
    </subcellularLocation>
</comment>
<comment type="similarity">
    <text evidence="3">Belongs to the complex I subunit 3 family.</text>
</comment>
<dbReference type="EC" id="7.1.1.2"/>
<dbReference type="EMBL" id="X83390">
    <property type="protein sequence ID" value="CAA58303.1"/>
    <property type="molecule type" value="Genomic_DNA"/>
</dbReference>
<dbReference type="PIR" id="S59150">
    <property type="entry name" value="S59150"/>
</dbReference>
<dbReference type="RefSeq" id="NP_007336.1">
    <property type="nucleotide sequence ID" value="NC_001761.1"/>
</dbReference>
<dbReference type="SMR" id="P48907"/>
<dbReference type="GeneID" id="808010"/>
<dbReference type="CTD" id="4537"/>
<dbReference type="GO" id="GO:0031966">
    <property type="term" value="C:mitochondrial membrane"/>
    <property type="evidence" value="ECO:0007669"/>
    <property type="project" value="UniProtKB-SubCell"/>
</dbReference>
<dbReference type="GO" id="GO:0030964">
    <property type="term" value="C:NADH dehydrogenase complex"/>
    <property type="evidence" value="ECO:0007669"/>
    <property type="project" value="TreeGrafter"/>
</dbReference>
<dbReference type="GO" id="GO:0008137">
    <property type="term" value="F:NADH dehydrogenase (ubiquinone) activity"/>
    <property type="evidence" value="ECO:0007669"/>
    <property type="project" value="UniProtKB-EC"/>
</dbReference>
<dbReference type="Gene3D" id="1.20.58.1610">
    <property type="entry name" value="NADH:ubiquinone/plastoquinone oxidoreductase, chain 3"/>
    <property type="match status" value="1"/>
</dbReference>
<dbReference type="InterPro" id="IPR000440">
    <property type="entry name" value="NADH_UbQ/plastoQ_OxRdtase_su3"/>
</dbReference>
<dbReference type="InterPro" id="IPR038430">
    <property type="entry name" value="NDAH_ubi_oxred_su3_sf"/>
</dbReference>
<dbReference type="PANTHER" id="PTHR11058">
    <property type="entry name" value="NADH-UBIQUINONE OXIDOREDUCTASE CHAIN 3"/>
    <property type="match status" value="1"/>
</dbReference>
<dbReference type="PANTHER" id="PTHR11058:SF9">
    <property type="entry name" value="NADH-UBIQUINONE OXIDOREDUCTASE CHAIN 3"/>
    <property type="match status" value="1"/>
</dbReference>
<dbReference type="Pfam" id="PF00507">
    <property type="entry name" value="Oxidored_q4"/>
    <property type="match status" value="1"/>
</dbReference>
<evidence type="ECO:0000250" key="1"/>
<evidence type="ECO:0000255" key="2"/>
<evidence type="ECO:0000305" key="3"/>
<reference key="1">
    <citation type="journal article" date="1995" name="Genetics">
        <title>Complete sequence and gene organization of the mitochondrial genome of the land snail Albinaria coerulea.</title>
        <authorList>
            <person name="Hatzoglou E."/>
            <person name="Rodakis G.C."/>
            <person name="Lecanidou R."/>
        </authorList>
    </citation>
    <scope>NUCLEOTIDE SEQUENCE [GENOMIC DNA]</scope>
</reference>
<feature type="chain" id="PRO_0000117700" description="NADH-ubiquinone oxidoreductase chain 3">
    <location>
        <begin position="1"/>
        <end position="117"/>
    </location>
</feature>
<feature type="transmembrane region" description="Helical" evidence="2">
    <location>
        <begin position="2"/>
        <end position="22"/>
    </location>
</feature>
<feature type="transmembrane region" description="Helical" evidence="2">
    <location>
        <begin position="56"/>
        <end position="76"/>
    </location>
</feature>
<feature type="transmembrane region" description="Helical" evidence="2">
    <location>
        <begin position="85"/>
        <end position="105"/>
    </location>
</feature>
<geneLocation type="mitochondrion"/>
<keyword id="KW-0249">Electron transport</keyword>
<keyword id="KW-0472">Membrane</keyword>
<keyword id="KW-0496">Mitochondrion</keyword>
<keyword id="KW-0520">NAD</keyword>
<keyword id="KW-0679">Respiratory chain</keyword>
<keyword id="KW-1278">Translocase</keyword>
<keyword id="KW-0812">Transmembrane</keyword>
<keyword id="KW-1133">Transmembrane helix</keyword>
<keyword id="KW-0813">Transport</keyword>
<keyword id="KW-0830">Ubiquinone</keyword>
<accession>P48907</accession>
<proteinExistence type="inferred from homology"/>